<proteinExistence type="inferred from homology"/>
<name>YFCD_SHIFL</name>
<gene>
    <name type="primary">yfcD</name>
    <name type="ordered locus">SF2375</name>
    <name type="ordered locus">S2510</name>
</gene>
<protein>
    <recommendedName>
        <fullName>Uncharacterized Nudix hydrolase YfcD</fullName>
        <ecNumber>3.6.-.-</ecNumber>
    </recommendedName>
</protein>
<comment type="cofactor">
    <cofactor evidence="1">
        <name>Mg(2+)</name>
        <dbReference type="ChEBI" id="CHEBI:18420"/>
    </cofactor>
</comment>
<comment type="similarity">
    <text evidence="3">Belongs to the Nudix hydrolase family.</text>
</comment>
<organism>
    <name type="scientific">Shigella flexneri</name>
    <dbReference type="NCBI Taxonomy" id="623"/>
    <lineage>
        <taxon>Bacteria</taxon>
        <taxon>Pseudomonadati</taxon>
        <taxon>Pseudomonadota</taxon>
        <taxon>Gammaproteobacteria</taxon>
        <taxon>Enterobacterales</taxon>
        <taxon>Enterobacteriaceae</taxon>
        <taxon>Shigella</taxon>
    </lineage>
</organism>
<keyword id="KW-0378">Hydrolase</keyword>
<keyword id="KW-0460">Magnesium</keyword>
<keyword id="KW-0479">Metal-binding</keyword>
<keyword id="KW-1185">Reference proteome</keyword>
<accession>P59196</accession>
<feature type="chain" id="PRO_0000057082" description="Uncharacterized Nudix hydrolase YfcD">
    <location>
        <begin position="1"/>
        <end position="180"/>
    </location>
</feature>
<feature type="domain" description="Nudix hydrolase" evidence="2">
    <location>
        <begin position="35"/>
        <end position="163"/>
    </location>
</feature>
<feature type="short sequence motif" description="Nudix box">
    <location>
        <begin position="72"/>
        <end position="94"/>
    </location>
</feature>
<feature type="binding site" evidence="1">
    <location>
        <position position="88"/>
    </location>
    <ligand>
        <name>Mg(2+)</name>
        <dbReference type="ChEBI" id="CHEBI:18420"/>
    </ligand>
</feature>
<feature type="binding site" evidence="1">
    <location>
        <position position="92"/>
    </location>
    <ligand>
        <name>Mg(2+)</name>
        <dbReference type="ChEBI" id="CHEBI:18420"/>
    </ligand>
</feature>
<reference key="1">
    <citation type="journal article" date="2002" name="Nucleic Acids Res.">
        <title>Genome sequence of Shigella flexneri 2a: insights into pathogenicity through comparison with genomes of Escherichia coli K12 and O157.</title>
        <authorList>
            <person name="Jin Q."/>
            <person name="Yuan Z."/>
            <person name="Xu J."/>
            <person name="Wang Y."/>
            <person name="Shen Y."/>
            <person name="Lu W."/>
            <person name="Wang J."/>
            <person name="Liu H."/>
            <person name="Yang J."/>
            <person name="Yang F."/>
            <person name="Zhang X."/>
            <person name="Zhang J."/>
            <person name="Yang G."/>
            <person name="Wu H."/>
            <person name="Qu D."/>
            <person name="Dong J."/>
            <person name="Sun L."/>
            <person name="Xue Y."/>
            <person name="Zhao A."/>
            <person name="Gao Y."/>
            <person name="Zhu J."/>
            <person name="Kan B."/>
            <person name="Ding K."/>
            <person name="Chen S."/>
            <person name="Cheng H."/>
            <person name="Yao Z."/>
            <person name="He B."/>
            <person name="Chen R."/>
            <person name="Ma D."/>
            <person name="Qiang B."/>
            <person name="Wen Y."/>
            <person name="Hou Y."/>
            <person name="Yu J."/>
        </authorList>
    </citation>
    <scope>NUCLEOTIDE SEQUENCE [LARGE SCALE GENOMIC DNA]</scope>
    <source>
        <strain>301 / Serotype 2a</strain>
    </source>
</reference>
<reference key="2">
    <citation type="journal article" date="2003" name="Infect. Immun.">
        <title>Complete genome sequence and comparative genomics of Shigella flexneri serotype 2a strain 2457T.</title>
        <authorList>
            <person name="Wei J."/>
            <person name="Goldberg M.B."/>
            <person name="Burland V."/>
            <person name="Venkatesan M.M."/>
            <person name="Deng W."/>
            <person name="Fournier G."/>
            <person name="Mayhew G.F."/>
            <person name="Plunkett G. III"/>
            <person name="Rose D.J."/>
            <person name="Darling A."/>
            <person name="Mau B."/>
            <person name="Perna N.T."/>
            <person name="Payne S.M."/>
            <person name="Runyen-Janecky L.J."/>
            <person name="Zhou S."/>
            <person name="Schwartz D.C."/>
            <person name="Blattner F.R."/>
        </authorList>
    </citation>
    <scope>NUCLEOTIDE SEQUENCE [LARGE SCALE GENOMIC DNA]</scope>
    <source>
        <strain>ATCC 700930 / 2457T / Serotype 2a</strain>
    </source>
</reference>
<evidence type="ECO:0000250" key="1"/>
<evidence type="ECO:0000255" key="2">
    <source>
        <dbReference type="PROSITE-ProRule" id="PRU00794"/>
    </source>
</evidence>
<evidence type="ECO:0000305" key="3"/>
<sequence>MEQRRLASTEWVDIVNEENEVIAQASREQMRAQCLRHRATYIVVHDGMGKILVQRRTETKDFLPGMLDATAGGVVQADEQLLESARREAEEELGIAGVPFAEHGQFYFEDKNCRVWGALFSCVSHGPFALQEDEVSGVCWLTPEEITARCDEFTPDSLKALALWMKRNAKNEAVETETAE</sequence>
<dbReference type="EC" id="3.6.-.-"/>
<dbReference type="EMBL" id="AE005674">
    <property type="protein sequence ID" value="AAN43888.1"/>
    <property type="molecule type" value="Genomic_DNA"/>
</dbReference>
<dbReference type="EMBL" id="AE014073">
    <property type="protein sequence ID" value="AAP17706.1"/>
    <property type="molecule type" value="Genomic_DNA"/>
</dbReference>
<dbReference type="RefSeq" id="NP_708181.1">
    <property type="nucleotide sequence ID" value="NC_004337.2"/>
</dbReference>
<dbReference type="RefSeq" id="WP_000437938.1">
    <property type="nucleotide sequence ID" value="NZ_WPGW01000016.1"/>
</dbReference>
<dbReference type="SMR" id="P59196"/>
<dbReference type="STRING" id="198214.SF2375"/>
<dbReference type="PaxDb" id="198214-SF2375"/>
<dbReference type="GeneID" id="1026560"/>
<dbReference type="KEGG" id="sfl:SF2375"/>
<dbReference type="KEGG" id="sfx:S2510"/>
<dbReference type="PATRIC" id="fig|198214.7.peg.2842"/>
<dbReference type="HOGENOM" id="CLU_060552_3_0_6"/>
<dbReference type="Proteomes" id="UP000001006">
    <property type="component" value="Chromosome"/>
</dbReference>
<dbReference type="Proteomes" id="UP000002673">
    <property type="component" value="Chromosome"/>
</dbReference>
<dbReference type="GO" id="GO:0016817">
    <property type="term" value="F:hydrolase activity, acting on acid anhydrides"/>
    <property type="evidence" value="ECO:0007669"/>
    <property type="project" value="InterPro"/>
</dbReference>
<dbReference type="GO" id="GO:0046872">
    <property type="term" value="F:metal ion binding"/>
    <property type="evidence" value="ECO:0007669"/>
    <property type="project" value="UniProtKB-KW"/>
</dbReference>
<dbReference type="CDD" id="cd04697">
    <property type="entry name" value="NUDIX_Hydrolase"/>
    <property type="match status" value="1"/>
</dbReference>
<dbReference type="FunFam" id="3.90.79.10:FF:000007">
    <property type="entry name" value="NUDIX hydrolase YfcD"/>
    <property type="match status" value="1"/>
</dbReference>
<dbReference type="Gene3D" id="3.90.79.10">
    <property type="entry name" value="Nucleoside Triphosphate Pyrophosphohydrolase"/>
    <property type="match status" value="1"/>
</dbReference>
<dbReference type="InterPro" id="IPR015797">
    <property type="entry name" value="NUDIX_hydrolase-like_dom_sf"/>
</dbReference>
<dbReference type="InterPro" id="IPR000086">
    <property type="entry name" value="NUDIX_hydrolase_dom"/>
</dbReference>
<dbReference type="InterPro" id="IPR024195">
    <property type="entry name" value="NUDIX_hydrolase_YfcD_pred"/>
</dbReference>
<dbReference type="NCBIfam" id="NF011922">
    <property type="entry name" value="PRK15393.1"/>
    <property type="match status" value="1"/>
</dbReference>
<dbReference type="PANTHER" id="PTHR10885">
    <property type="entry name" value="ISOPENTENYL-DIPHOSPHATE DELTA-ISOMERASE"/>
    <property type="match status" value="1"/>
</dbReference>
<dbReference type="PANTHER" id="PTHR10885:SF0">
    <property type="entry name" value="ISOPENTENYL-DIPHOSPHATE DELTA-ISOMERASE"/>
    <property type="match status" value="1"/>
</dbReference>
<dbReference type="Pfam" id="PF00293">
    <property type="entry name" value="NUDIX"/>
    <property type="match status" value="1"/>
</dbReference>
<dbReference type="PIRSF" id="PIRSF017340">
    <property type="entry name" value="Nudix_hydro"/>
    <property type="match status" value="1"/>
</dbReference>
<dbReference type="SUPFAM" id="SSF55811">
    <property type="entry name" value="Nudix"/>
    <property type="match status" value="1"/>
</dbReference>
<dbReference type="PROSITE" id="PS51462">
    <property type="entry name" value="NUDIX"/>
    <property type="match status" value="1"/>
</dbReference>